<comment type="function">
    <text evidence="1">Multifunctional enzyme that catalyzes the SAM-dependent methylations of uroporphyrinogen III at position C-2 and C-7 to form precorrin-2 via precorrin-1. Then it catalyzes the NAD-dependent ring dehydrogenation of precorrin-2 to yield sirohydrochlorin. Finally, it catalyzes the ferrochelation of sirohydrochlorin to yield siroheme.</text>
</comment>
<comment type="catalytic activity">
    <reaction evidence="1">
        <text>uroporphyrinogen III + 2 S-adenosyl-L-methionine = precorrin-2 + 2 S-adenosyl-L-homocysteine + H(+)</text>
        <dbReference type="Rhea" id="RHEA:32459"/>
        <dbReference type="ChEBI" id="CHEBI:15378"/>
        <dbReference type="ChEBI" id="CHEBI:57308"/>
        <dbReference type="ChEBI" id="CHEBI:57856"/>
        <dbReference type="ChEBI" id="CHEBI:58827"/>
        <dbReference type="ChEBI" id="CHEBI:59789"/>
        <dbReference type="EC" id="2.1.1.107"/>
    </reaction>
</comment>
<comment type="catalytic activity">
    <reaction evidence="1">
        <text>precorrin-2 + NAD(+) = sirohydrochlorin + NADH + 2 H(+)</text>
        <dbReference type="Rhea" id="RHEA:15613"/>
        <dbReference type="ChEBI" id="CHEBI:15378"/>
        <dbReference type="ChEBI" id="CHEBI:57540"/>
        <dbReference type="ChEBI" id="CHEBI:57945"/>
        <dbReference type="ChEBI" id="CHEBI:58351"/>
        <dbReference type="ChEBI" id="CHEBI:58827"/>
        <dbReference type="EC" id="1.3.1.76"/>
    </reaction>
</comment>
<comment type="catalytic activity">
    <reaction evidence="1">
        <text>siroheme + 2 H(+) = sirohydrochlorin + Fe(2+)</text>
        <dbReference type="Rhea" id="RHEA:24360"/>
        <dbReference type="ChEBI" id="CHEBI:15378"/>
        <dbReference type="ChEBI" id="CHEBI:29033"/>
        <dbReference type="ChEBI" id="CHEBI:58351"/>
        <dbReference type="ChEBI" id="CHEBI:60052"/>
        <dbReference type="EC" id="4.99.1.4"/>
    </reaction>
</comment>
<comment type="pathway">
    <text evidence="1">Cofactor biosynthesis; adenosylcobalamin biosynthesis; precorrin-2 from uroporphyrinogen III: step 1/1.</text>
</comment>
<comment type="pathway">
    <text evidence="1">Cofactor biosynthesis; adenosylcobalamin biosynthesis; sirohydrochlorin from precorrin-2: step 1/1.</text>
</comment>
<comment type="pathway">
    <text evidence="1">Porphyrin-containing compound metabolism; siroheme biosynthesis; precorrin-2 from uroporphyrinogen III: step 1/1.</text>
</comment>
<comment type="pathway">
    <text evidence="1">Porphyrin-containing compound metabolism; siroheme biosynthesis; siroheme from sirohydrochlorin: step 1/1.</text>
</comment>
<comment type="pathway">
    <text evidence="1">Porphyrin-containing compound metabolism; siroheme biosynthesis; sirohydrochlorin from precorrin-2: step 1/1.</text>
</comment>
<comment type="similarity">
    <text evidence="1">In the N-terminal section; belongs to the precorrin-2 dehydrogenase / sirohydrochlorin ferrochelatase family.</text>
</comment>
<comment type="similarity">
    <text evidence="1">In the C-terminal section; belongs to the precorrin methyltransferase family.</text>
</comment>
<reference key="1">
    <citation type="submission" date="2007-02" db="EMBL/GenBank/DDBJ databases">
        <title>Complete sequence of chromosome of Yersinia pestis Pestoides F.</title>
        <authorList>
            <consortium name="US DOE Joint Genome Institute"/>
            <person name="Copeland A."/>
            <person name="Lucas S."/>
            <person name="Lapidus A."/>
            <person name="Barry K."/>
            <person name="Detter J.C."/>
            <person name="Glavina del Rio T."/>
            <person name="Hammon N."/>
            <person name="Israni S."/>
            <person name="Dalin E."/>
            <person name="Tice H."/>
            <person name="Pitluck S."/>
            <person name="Di Bartolo G."/>
            <person name="Chain P."/>
            <person name="Malfatti S."/>
            <person name="Shin M."/>
            <person name="Vergez L."/>
            <person name="Schmutz J."/>
            <person name="Larimer F."/>
            <person name="Land M."/>
            <person name="Hauser L."/>
            <person name="Worsham P."/>
            <person name="Chu M."/>
            <person name="Bearden S."/>
            <person name="Garcia E."/>
            <person name="Richardson P."/>
        </authorList>
    </citation>
    <scope>NUCLEOTIDE SEQUENCE [LARGE SCALE GENOMIC DNA]</scope>
    <source>
        <strain>Pestoides F</strain>
    </source>
</reference>
<organism>
    <name type="scientific">Yersinia pestis (strain Pestoides F)</name>
    <dbReference type="NCBI Taxonomy" id="386656"/>
    <lineage>
        <taxon>Bacteria</taxon>
        <taxon>Pseudomonadati</taxon>
        <taxon>Pseudomonadota</taxon>
        <taxon>Gammaproteobacteria</taxon>
        <taxon>Enterobacterales</taxon>
        <taxon>Yersiniaceae</taxon>
        <taxon>Yersinia</taxon>
    </lineage>
</organism>
<feature type="chain" id="PRO_0000330576" description="Siroheme synthase 1">
    <location>
        <begin position="1"/>
        <end position="473"/>
    </location>
</feature>
<feature type="region of interest" description="Precorrin-2 dehydrogenase /sirohydrochlorin ferrochelatase" evidence="1">
    <location>
        <begin position="1"/>
        <end position="204"/>
    </location>
</feature>
<feature type="region of interest" description="Uroporphyrinogen-III C-methyltransferase" evidence="1">
    <location>
        <begin position="216"/>
        <end position="473"/>
    </location>
</feature>
<feature type="active site" description="Proton acceptor" evidence="1">
    <location>
        <position position="248"/>
    </location>
</feature>
<feature type="active site" description="Proton donor" evidence="1">
    <location>
        <position position="270"/>
    </location>
</feature>
<feature type="binding site" evidence="1">
    <location>
        <begin position="22"/>
        <end position="23"/>
    </location>
    <ligand>
        <name>NAD(+)</name>
        <dbReference type="ChEBI" id="CHEBI:57540"/>
    </ligand>
</feature>
<feature type="binding site" evidence="1">
    <location>
        <begin position="43"/>
        <end position="44"/>
    </location>
    <ligand>
        <name>NAD(+)</name>
        <dbReference type="ChEBI" id="CHEBI:57540"/>
    </ligand>
</feature>
<feature type="binding site" evidence="1">
    <location>
        <position position="225"/>
    </location>
    <ligand>
        <name>S-adenosyl-L-methionine</name>
        <dbReference type="ChEBI" id="CHEBI:59789"/>
    </ligand>
</feature>
<feature type="binding site" evidence="1">
    <location>
        <begin position="301"/>
        <end position="303"/>
    </location>
    <ligand>
        <name>S-adenosyl-L-methionine</name>
        <dbReference type="ChEBI" id="CHEBI:59789"/>
    </ligand>
</feature>
<feature type="binding site" evidence="1">
    <location>
        <position position="306"/>
    </location>
    <ligand>
        <name>S-adenosyl-L-methionine</name>
        <dbReference type="ChEBI" id="CHEBI:59789"/>
    </ligand>
</feature>
<feature type="binding site" evidence="1">
    <location>
        <begin position="331"/>
        <end position="332"/>
    </location>
    <ligand>
        <name>S-adenosyl-L-methionine</name>
        <dbReference type="ChEBI" id="CHEBI:59789"/>
    </ligand>
</feature>
<feature type="binding site" evidence="1">
    <location>
        <position position="382"/>
    </location>
    <ligand>
        <name>S-adenosyl-L-methionine</name>
        <dbReference type="ChEBI" id="CHEBI:59789"/>
    </ligand>
</feature>
<feature type="binding site" evidence="1">
    <location>
        <position position="411"/>
    </location>
    <ligand>
        <name>S-adenosyl-L-methionine</name>
        <dbReference type="ChEBI" id="CHEBI:59789"/>
    </ligand>
</feature>
<feature type="modified residue" description="Phosphoserine" evidence="1">
    <location>
        <position position="128"/>
    </location>
</feature>
<proteinExistence type="inferred from homology"/>
<dbReference type="EC" id="2.1.1.107" evidence="1"/>
<dbReference type="EC" id="1.3.1.76" evidence="1"/>
<dbReference type="EC" id="4.99.1.4" evidence="1"/>
<dbReference type="EMBL" id="CP000668">
    <property type="protein sequence ID" value="ABP38511.1"/>
    <property type="molecule type" value="Genomic_DNA"/>
</dbReference>
<dbReference type="SMR" id="A4TGU8"/>
<dbReference type="KEGG" id="ypp:YPDSF_0085"/>
<dbReference type="PATRIC" id="fig|386656.14.peg.483"/>
<dbReference type="UniPathway" id="UPA00148">
    <property type="reaction ID" value="UER00211"/>
</dbReference>
<dbReference type="UniPathway" id="UPA00148">
    <property type="reaction ID" value="UER00222"/>
</dbReference>
<dbReference type="UniPathway" id="UPA00262">
    <property type="reaction ID" value="UER00211"/>
</dbReference>
<dbReference type="UniPathway" id="UPA00262">
    <property type="reaction ID" value="UER00222"/>
</dbReference>
<dbReference type="UniPathway" id="UPA00262">
    <property type="reaction ID" value="UER00376"/>
</dbReference>
<dbReference type="GO" id="GO:0051287">
    <property type="term" value="F:NAD binding"/>
    <property type="evidence" value="ECO:0007669"/>
    <property type="project" value="InterPro"/>
</dbReference>
<dbReference type="GO" id="GO:0043115">
    <property type="term" value="F:precorrin-2 dehydrogenase activity"/>
    <property type="evidence" value="ECO:0007669"/>
    <property type="project" value="UniProtKB-UniRule"/>
</dbReference>
<dbReference type="GO" id="GO:0051266">
    <property type="term" value="F:sirohydrochlorin ferrochelatase activity"/>
    <property type="evidence" value="ECO:0007669"/>
    <property type="project" value="UniProtKB-EC"/>
</dbReference>
<dbReference type="GO" id="GO:0004851">
    <property type="term" value="F:uroporphyrin-III C-methyltransferase activity"/>
    <property type="evidence" value="ECO:0007669"/>
    <property type="project" value="UniProtKB-UniRule"/>
</dbReference>
<dbReference type="GO" id="GO:0009236">
    <property type="term" value="P:cobalamin biosynthetic process"/>
    <property type="evidence" value="ECO:0007669"/>
    <property type="project" value="UniProtKB-UniRule"/>
</dbReference>
<dbReference type="GO" id="GO:0032259">
    <property type="term" value="P:methylation"/>
    <property type="evidence" value="ECO:0007669"/>
    <property type="project" value="UniProtKB-KW"/>
</dbReference>
<dbReference type="GO" id="GO:0019354">
    <property type="term" value="P:siroheme biosynthetic process"/>
    <property type="evidence" value="ECO:0007669"/>
    <property type="project" value="UniProtKB-UniRule"/>
</dbReference>
<dbReference type="CDD" id="cd11642">
    <property type="entry name" value="SUMT"/>
    <property type="match status" value="1"/>
</dbReference>
<dbReference type="FunFam" id="1.10.8.210:FF:000001">
    <property type="entry name" value="Siroheme synthase"/>
    <property type="match status" value="1"/>
</dbReference>
<dbReference type="FunFam" id="3.30.160.110:FF:000001">
    <property type="entry name" value="Siroheme synthase"/>
    <property type="match status" value="1"/>
</dbReference>
<dbReference type="FunFam" id="3.30.950.10:FF:000001">
    <property type="entry name" value="Siroheme synthase"/>
    <property type="match status" value="1"/>
</dbReference>
<dbReference type="FunFam" id="3.40.1010.10:FF:000001">
    <property type="entry name" value="Siroheme synthase"/>
    <property type="match status" value="1"/>
</dbReference>
<dbReference type="FunFam" id="3.40.50.720:FF:000092">
    <property type="entry name" value="Siroheme synthase"/>
    <property type="match status" value="1"/>
</dbReference>
<dbReference type="Gene3D" id="3.40.1010.10">
    <property type="entry name" value="Cobalt-precorrin-4 Transmethylase, Domain 1"/>
    <property type="match status" value="1"/>
</dbReference>
<dbReference type="Gene3D" id="3.30.950.10">
    <property type="entry name" value="Methyltransferase, Cobalt-precorrin-4 Transmethylase, Domain 2"/>
    <property type="match status" value="1"/>
</dbReference>
<dbReference type="Gene3D" id="3.40.50.720">
    <property type="entry name" value="NAD(P)-binding Rossmann-like Domain"/>
    <property type="match status" value="1"/>
</dbReference>
<dbReference type="Gene3D" id="1.10.8.210">
    <property type="entry name" value="Sirohaem synthase, dimerisation domain"/>
    <property type="match status" value="1"/>
</dbReference>
<dbReference type="Gene3D" id="3.30.160.110">
    <property type="entry name" value="Siroheme synthase, domain 2"/>
    <property type="match status" value="1"/>
</dbReference>
<dbReference type="HAMAP" id="MF_01646">
    <property type="entry name" value="Siroheme_synth"/>
    <property type="match status" value="1"/>
</dbReference>
<dbReference type="InterPro" id="IPR000878">
    <property type="entry name" value="4pyrrol_Mease"/>
</dbReference>
<dbReference type="InterPro" id="IPR035996">
    <property type="entry name" value="4pyrrol_Methylase_sf"/>
</dbReference>
<dbReference type="InterPro" id="IPR014777">
    <property type="entry name" value="4pyrrole_Mease_sub1"/>
</dbReference>
<dbReference type="InterPro" id="IPR014776">
    <property type="entry name" value="4pyrrole_Mease_sub2"/>
</dbReference>
<dbReference type="InterPro" id="IPR006366">
    <property type="entry name" value="CobA/CysG_C"/>
</dbReference>
<dbReference type="InterPro" id="IPR036291">
    <property type="entry name" value="NAD(P)-bd_dom_sf"/>
</dbReference>
<dbReference type="InterPro" id="IPR050161">
    <property type="entry name" value="Siro_Cobalamin_biosynth"/>
</dbReference>
<dbReference type="InterPro" id="IPR037115">
    <property type="entry name" value="Sirohaem_synt_dimer_dom_sf"/>
</dbReference>
<dbReference type="InterPro" id="IPR012409">
    <property type="entry name" value="Sirohaem_synth"/>
</dbReference>
<dbReference type="InterPro" id="IPR028281">
    <property type="entry name" value="Sirohaem_synthase_central"/>
</dbReference>
<dbReference type="InterPro" id="IPR019478">
    <property type="entry name" value="Sirohaem_synthase_dimer_dom"/>
</dbReference>
<dbReference type="InterPro" id="IPR006367">
    <property type="entry name" value="Sirohaem_synthase_N"/>
</dbReference>
<dbReference type="InterPro" id="IPR003043">
    <property type="entry name" value="Uropor_MeTrfase_CS"/>
</dbReference>
<dbReference type="NCBIfam" id="TIGR01469">
    <property type="entry name" value="cobA_cysG_Cterm"/>
    <property type="match status" value="1"/>
</dbReference>
<dbReference type="NCBIfam" id="TIGR01470">
    <property type="entry name" value="cysG_Nterm"/>
    <property type="match status" value="1"/>
</dbReference>
<dbReference type="NCBIfam" id="NF004790">
    <property type="entry name" value="PRK06136.1"/>
    <property type="match status" value="1"/>
</dbReference>
<dbReference type="NCBIfam" id="NF007922">
    <property type="entry name" value="PRK10637.1"/>
    <property type="match status" value="1"/>
</dbReference>
<dbReference type="PANTHER" id="PTHR45790:SF1">
    <property type="entry name" value="SIROHEME SYNTHASE"/>
    <property type="match status" value="1"/>
</dbReference>
<dbReference type="PANTHER" id="PTHR45790">
    <property type="entry name" value="SIROHEME SYNTHASE-RELATED"/>
    <property type="match status" value="1"/>
</dbReference>
<dbReference type="Pfam" id="PF10414">
    <property type="entry name" value="CysG_dimeriser"/>
    <property type="match status" value="1"/>
</dbReference>
<dbReference type="Pfam" id="PF13241">
    <property type="entry name" value="NAD_binding_7"/>
    <property type="match status" value="1"/>
</dbReference>
<dbReference type="Pfam" id="PF14824">
    <property type="entry name" value="Sirohm_synth_M"/>
    <property type="match status" value="1"/>
</dbReference>
<dbReference type="Pfam" id="PF00590">
    <property type="entry name" value="TP_methylase"/>
    <property type="match status" value="1"/>
</dbReference>
<dbReference type="PIRSF" id="PIRSF036426">
    <property type="entry name" value="Sirohaem_synth"/>
    <property type="match status" value="1"/>
</dbReference>
<dbReference type="SUPFAM" id="SSF51735">
    <property type="entry name" value="NAD(P)-binding Rossmann-fold domains"/>
    <property type="match status" value="1"/>
</dbReference>
<dbReference type="SUPFAM" id="SSF75615">
    <property type="entry name" value="Siroheme synthase middle domains-like"/>
    <property type="match status" value="1"/>
</dbReference>
<dbReference type="SUPFAM" id="SSF53790">
    <property type="entry name" value="Tetrapyrrole methylase"/>
    <property type="match status" value="1"/>
</dbReference>
<dbReference type="PROSITE" id="PS00839">
    <property type="entry name" value="SUMT_1"/>
    <property type="match status" value="1"/>
</dbReference>
<dbReference type="PROSITE" id="PS00840">
    <property type="entry name" value="SUMT_2"/>
    <property type="match status" value="1"/>
</dbReference>
<evidence type="ECO:0000255" key="1">
    <source>
        <dbReference type="HAMAP-Rule" id="MF_01646"/>
    </source>
</evidence>
<keyword id="KW-0169">Cobalamin biosynthesis</keyword>
<keyword id="KW-0456">Lyase</keyword>
<keyword id="KW-0489">Methyltransferase</keyword>
<keyword id="KW-0511">Multifunctional enzyme</keyword>
<keyword id="KW-0520">NAD</keyword>
<keyword id="KW-0560">Oxidoreductase</keyword>
<keyword id="KW-0597">Phosphoprotein</keyword>
<keyword id="KW-0627">Porphyrin biosynthesis</keyword>
<keyword id="KW-0949">S-adenosyl-L-methionine</keyword>
<keyword id="KW-0808">Transferase</keyword>
<sequence length="473" mass="51946">MDYFPIFCQLQHKACLLVGGGEIAERKARLLLDAGALVTVNACEFAPQFHHWADQGQLSLISGEFVPELLADKWLVIAATDQLSVNALVYQSANQQRIFCNVVDDPKRTSFIMPSIIDRSPIMIAVSSGGKAPVLARLLREKLEALLPQHLGQLAQLAGNLRQRVKQHFTVMTERRRFWEKLLTHDRLAQSLANNDHVQADQHVEQLFSAPLTDRGEVVLVGAGPGDAGLLTLKGLQQIQQADVVVYDRLVSDEVMNLVRRDAERIFVGKQSGHHCVPQEQINQILLQQAQSGKRVVRLKGGDPFIFGRGGEELEELAGYGIPFSVVPGITAASGCSAYSGIPLTHRDHAQSVRLVTGHAKKEGQLDWANLAAEKQTLVFYMGLSQAGEIQQQLIQHGMPATTQVALVENGTSRHQRVVSGELSQLALLSQQVSSPSLIIVGSVVSLREKLNWFSSRHHDDQPKVTECVAHVG</sequence>
<accession>A4TGU8</accession>
<protein>
    <recommendedName>
        <fullName evidence="1">Siroheme synthase 1</fullName>
    </recommendedName>
    <domain>
        <recommendedName>
            <fullName evidence="1">Uroporphyrinogen-III C-methyltransferase 1</fullName>
            <shortName evidence="1">Urogen III methylase 1</shortName>
            <ecNumber evidence="1">2.1.1.107</ecNumber>
        </recommendedName>
        <alternativeName>
            <fullName evidence="1">SUMT 1</fullName>
        </alternativeName>
        <alternativeName>
            <fullName evidence="1">Uroporphyrinogen III methylase 1</fullName>
            <shortName evidence="1">UROM 1</shortName>
        </alternativeName>
    </domain>
    <domain>
        <recommendedName>
            <fullName evidence="1">Precorrin-2 dehydrogenase 1</fullName>
            <ecNumber evidence="1">1.3.1.76</ecNumber>
        </recommendedName>
    </domain>
    <domain>
        <recommendedName>
            <fullName evidence="1">Sirohydrochlorin ferrochelatase 1</fullName>
            <ecNumber evidence="1">4.99.1.4</ecNumber>
        </recommendedName>
    </domain>
</protein>
<name>CYSG1_YERPP</name>
<gene>
    <name evidence="1" type="primary">cysG1</name>
    <name type="ordered locus">YPDSF_0085</name>
</gene>